<reference key="1">
    <citation type="journal article" date="1999" name="Nat. Genet.">
        <title>Comparative genomes of Chlamydia pneumoniae and C. trachomatis.</title>
        <authorList>
            <person name="Kalman S."/>
            <person name="Mitchell W.P."/>
            <person name="Marathe R."/>
            <person name="Lammel C.J."/>
            <person name="Fan J."/>
            <person name="Hyman R.W."/>
            <person name="Olinger L."/>
            <person name="Grimwood J."/>
            <person name="Davis R.W."/>
            <person name="Stephens R.S."/>
        </authorList>
    </citation>
    <scope>NUCLEOTIDE SEQUENCE [LARGE SCALE GENOMIC DNA]</scope>
    <source>
        <strain>CWL029</strain>
    </source>
</reference>
<reference key="2">
    <citation type="journal article" date="2000" name="Nucleic Acids Res.">
        <title>Genome sequences of Chlamydia trachomatis MoPn and Chlamydia pneumoniae AR39.</title>
        <authorList>
            <person name="Read T.D."/>
            <person name="Brunham R.C."/>
            <person name="Shen C."/>
            <person name="Gill S.R."/>
            <person name="Heidelberg J.F."/>
            <person name="White O."/>
            <person name="Hickey E.K."/>
            <person name="Peterson J.D."/>
            <person name="Utterback T.R."/>
            <person name="Berry K.J."/>
            <person name="Bass S."/>
            <person name="Linher K.D."/>
            <person name="Weidman J.F."/>
            <person name="Khouri H.M."/>
            <person name="Craven B."/>
            <person name="Bowman C."/>
            <person name="Dodson R.J."/>
            <person name="Gwinn M.L."/>
            <person name="Nelson W.C."/>
            <person name="DeBoy R.T."/>
            <person name="Kolonay J.F."/>
            <person name="McClarty G."/>
            <person name="Salzberg S.L."/>
            <person name="Eisen J.A."/>
            <person name="Fraser C.M."/>
        </authorList>
    </citation>
    <scope>NUCLEOTIDE SEQUENCE [LARGE SCALE GENOMIC DNA]</scope>
    <source>
        <strain>AR39</strain>
    </source>
</reference>
<reference key="3">
    <citation type="journal article" date="2000" name="Nucleic Acids Res.">
        <title>Comparison of whole genome sequences of Chlamydia pneumoniae J138 from Japan and CWL029 from USA.</title>
        <authorList>
            <person name="Shirai M."/>
            <person name="Hirakawa H."/>
            <person name="Kimoto M."/>
            <person name="Tabuchi M."/>
            <person name="Kishi F."/>
            <person name="Ouchi K."/>
            <person name="Shiba T."/>
            <person name="Ishii K."/>
            <person name="Hattori M."/>
            <person name="Kuhara S."/>
            <person name="Nakazawa T."/>
        </authorList>
    </citation>
    <scope>NUCLEOTIDE SEQUENCE [LARGE SCALE GENOMIC DNA]</scope>
    <source>
        <strain>J138</strain>
    </source>
</reference>
<reference key="4">
    <citation type="submission" date="2002-05" db="EMBL/GenBank/DDBJ databases">
        <title>The genome sequence of Chlamydia pneumoniae TW183 and comparison with other Chlamydia strains based on whole genome sequence analysis.</title>
        <authorList>
            <person name="Geng M.M."/>
            <person name="Schuhmacher A."/>
            <person name="Muehldorfer I."/>
            <person name="Bensch K.W."/>
            <person name="Schaefer K.P."/>
            <person name="Schneider S."/>
            <person name="Pohl T."/>
            <person name="Essig A."/>
            <person name="Marre R."/>
            <person name="Melchers K."/>
        </authorList>
    </citation>
    <scope>NUCLEOTIDE SEQUENCE [LARGE SCALE GENOMIC DNA]</scope>
    <source>
        <strain>TW-183</strain>
    </source>
</reference>
<dbReference type="EC" id="2.1.2.1" evidence="1"/>
<dbReference type="EMBL" id="AE001363">
    <property type="protein sequence ID" value="AAD18661.1"/>
    <property type="status" value="ALT_INIT"/>
    <property type="molecule type" value="Genomic_DNA"/>
</dbReference>
<dbReference type="EMBL" id="AE002161">
    <property type="protein sequence ID" value="AAF38098.1"/>
    <property type="molecule type" value="Genomic_DNA"/>
</dbReference>
<dbReference type="EMBL" id="BA000008">
    <property type="protein sequence ID" value="BAA98727.1"/>
    <property type="status" value="ALT_INIT"/>
    <property type="molecule type" value="Genomic_DNA"/>
</dbReference>
<dbReference type="EMBL" id="AE009440">
    <property type="protein sequence ID" value="AAP98471.1"/>
    <property type="status" value="ALT_INIT"/>
    <property type="molecule type" value="Genomic_DNA"/>
</dbReference>
<dbReference type="PIR" id="E86555">
    <property type="entry name" value="E86555"/>
</dbReference>
<dbReference type="PIR" id="G81598">
    <property type="entry name" value="G81598"/>
</dbReference>
<dbReference type="PIR" id="H72067">
    <property type="entry name" value="H72067"/>
</dbReference>
<dbReference type="RefSeq" id="NP_224717.1">
    <property type="nucleotide sequence ID" value="NC_000922.1"/>
</dbReference>
<dbReference type="RefSeq" id="WP_010891994.1">
    <property type="nucleotide sequence ID" value="NZ_LN847257.1"/>
</dbReference>
<dbReference type="SMR" id="Q9Z831"/>
<dbReference type="STRING" id="406984.CPK_ORF01035"/>
<dbReference type="GeneID" id="45050563"/>
<dbReference type="KEGG" id="cpa:CP_0232"/>
<dbReference type="KEGG" id="cpj:glyA"/>
<dbReference type="KEGG" id="cpn:CPn_0521"/>
<dbReference type="KEGG" id="cpt:CpB0542"/>
<dbReference type="PATRIC" id="fig|115713.3.peg.580"/>
<dbReference type="eggNOG" id="COG0112">
    <property type="taxonomic scope" value="Bacteria"/>
</dbReference>
<dbReference type="HOGENOM" id="CLU_022477_2_1_0"/>
<dbReference type="UniPathway" id="UPA00193"/>
<dbReference type="UniPathway" id="UPA00288">
    <property type="reaction ID" value="UER01023"/>
</dbReference>
<dbReference type="Proteomes" id="UP000000583">
    <property type="component" value="Chromosome"/>
</dbReference>
<dbReference type="Proteomes" id="UP000000801">
    <property type="component" value="Chromosome"/>
</dbReference>
<dbReference type="GO" id="GO:0005829">
    <property type="term" value="C:cytosol"/>
    <property type="evidence" value="ECO:0007669"/>
    <property type="project" value="TreeGrafter"/>
</dbReference>
<dbReference type="GO" id="GO:0004372">
    <property type="term" value="F:glycine hydroxymethyltransferase activity"/>
    <property type="evidence" value="ECO:0007669"/>
    <property type="project" value="UniProtKB-UniRule"/>
</dbReference>
<dbReference type="GO" id="GO:0030170">
    <property type="term" value="F:pyridoxal phosphate binding"/>
    <property type="evidence" value="ECO:0007669"/>
    <property type="project" value="UniProtKB-UniRule"/>
</dbReference>
<dbReference type="GO" id="GO:0019264">
    <property type="term" value="P:glycine biosynthetic process from serine"/>
    <property type="evidence" value="ECO:0007669"/>
    <property type="project" value="UniProtKB-UniRule"/>
</dbReference>
<dbReference type="GO" id="GO:0035999">
    <property type="term" value="P:tetrahydrofolate interconversion"/>
    <property type="evidence" value="ECO:0007669"/>
    <property type="project" value="UniProtKB-UniRule"/>
</dbReference>
<dbReference type="CDD" id="cd00378">
    <property type="entry name" value="SHMT"/>
    <property type="match status" value="1"/>
</dbReference>
<dbReference type="FunFam" id="3.40.640.10:FF:000060">
    <property type="entry name" value="Serine hydroxymethyltransferase"/>
    <property type="match status" value="1"/>
</dbReference>
<dbReference type="Gene3D" id="3.90.1150.10">
    <property type="entry name" value="Aspartate Aminotransferase, domain 1"/>
    <property type="match status" value="1"/>
</dbReference>
<dbReference type="Gene3D" id="3.40.640.10">
    <property type="entry name" value="Type I PLP-dependent aspartate aminotransferase-like (Major domain)"/>
    <property type="match status" value="1"/>
</dbReference>
<dbReference type="HAMAP" id="MF_00051">
    <property type="entry name" value="SHMT"/>
    <property type="match status" value="1"/>
</dbReference>
<dbReference type="InterPro" id="IPR015424">
    <property type="entry name" value="PyrdxlP-dep_Trfase"/>
</dbReference>
<dbReference type="InterPro" id="IPR015421">
    <property type="entry name" value="PyrdxlP-dep_Trfase_major"/>
</dbReference>
<dbReference type="InterPro" id="IPR015422">
    <property type="entry name" value="PyrdxlP-dep_Trfase_small"/>
</dbReference>
<dbReference type="InterPro" id="IPR001085">
    <property type="entry name" value="Ser_HO-MeTrfase"/>
</dbReference>
<dbReference type="InterPro" id="IPR049943">
    <property type="entry name" value="Ser_HO-MeTrfase-like"/>
</dbReference>
<dbReference type="InterPro" id="IPR019798">
    <property type="entry name" value="Ser_HO-MeTrfase_PLP_BS"/>
</dbReference>
<dbReference type="InterPro" id="IPR039429">
    <property type="entry name" value="SHMT-like_dom"/>
</dbReference>
<dbReference type="NCBIfam" id="NF010094">
    <property type="entry name" value="PRK13580.1"/>
    <property type="match status" value="1"/>
</dbReference>
<dbReference type="PANTHER" id="PTHR11680">
    <property type="entry name" value="SERINE HYDROXYMETHYLTRANSFERASE"/>
    <property type="match status" value="1"/>
</dbReference>
<dbReference type="PANTHER" id="PTHR11680:SF35">
    <property type="entry name" value="SERINE HYDROXYMETHYLTRANSFERASE 1"/>
    <property type="match status" value="1"/>
</dbReference>
<dbReference type="Pfam" id="PF00464">
    <property type="entry name" value="SHMT"/>
    <property type="match status" value="2"/>
</dbReference>
<dbReference type="PIRSF" id="PIRSF000412">
    <property type="entry name" value="SHMT"/>
    <property type="match status" value="1"/>
</dbReference>
<dbReference type="SUPFAM" id="SSF53383">
    <property type="entry name" value="PLP-dependent transferases"/>
    <property type="match status" value="1"/>
</dbReference>
<dbReference type="PROSITE" id="PS00096">
    <property type="entry name" value="SHMT"/>
    <property type="match status" value="1"/>
</dbReference>
<name>GLYA_CHLPN</name>
<accession>Q9Z831</accession>
<accession>Q9JQL1</accession>
<accession>Q9JSE3</accession>
<protein>
    <recommendedName>
        <fullName evidence="1">Serine hydroxymethyltransferase</fullName>
        <shortName evidence="1">SHMT</shortName>
        <shortName evidence="1">Serine methylase</shortName>
        <ecNumber evidence="1">2.1.2.1</ecNumber>
    </recommendedName>
</protein>
<feature type="chain" id="PRO_0000113559" description="Serine hydroxymethyltransferase">
    <location>
        <begin position="1"/>
        <end position="497"/>
    </location>
</feature>
<feature type="binding site" evidence="1">
    <location>
        <position position="176"/>
    </location>
    <ligand>
        <name>(6S)-5,6,7,8-tetrahydrofolate</name>
        <dbReference type="ChEBI" id="CHEBI:57453"/>
    </ligand>
</feature>
<feature type="binding site" evidence="1">
    <location>
        <begin position="180"/>
        <end position="182"/>
    </location>
    <ligand>
        <name>(6S)-5,6,7,8-tetrahydrofolate</name>
        <dbReference type="ChEBI" id="CHEBI:57453"/>
    </ligand>
</feature>
<feature type="binding site" evidence="1">
    <location>
        <position position="306"/>
    </location>
    <ligand>
        <name>(6S)-5,6,7,8-tetrahydrofolate</name>
        <dbReference type="ChEBI" id="CHEBI:57453"/>
    </ligand>
</feature>
<feature type="site" description="Plays an important role in substrate specificity" evidence="1">
    <location>
        <position position="288"/>
    </location>
</feature>
<feature type="modified residue" description="N6-(pyridoxal phosphate)lysine" evidence="1">
    <location>
        <position position="289"/>
    </location>
</feature>
<proteinExistence type="inferred from homology"/>
<evidence type="ECO:0000255" key="1">
    <source>
        <dbReference type="HAMAP-Rule" id="MF_00051"/>
    </source>
</evidence>
<evidence type="ECO:0000305" key="2"/>
<comment type="function">
    <text evidence="1">Catalyzes the reversible interconversion of serine and glycine with tetrahydrofolate (THF) serving as the one-carbon carrier. This reaction serves as the major source of one-carbon groups required for the biosynthesis of purines, thymidylate, methionine, and other important biomolecules. Also exhibits THF-independent aldolase activity toward beta-hydroxyamino acids, producing glycine and aldehydes, via a retro-aldol mechanism.</text>
</comment>
<comment type="catalytic activity">
    <reaction evidence="1">
        <text>(6R)-5,10-methylene-5,6,7,8-tetrahydrofolate + glycine + H2O = (6S)-5,6,7,8-tetrahydrofolate + L-serine</text>
        <dbReference type="Rhea" id="RHEA:15481"/>
        <dbReference type="ChEBI" id="CHEBI:15377"/>
        <dbReference type="ChEBI" id="CHEBI:15636"/>
        <dbReference type="ChEBI" id="CHEBI:33384"/>
        <dbReference type="ChEBI" id="CHEBI:57305"/>
        <dbReference type="ChEBI" id="CHEBI:57453"/>
        <dbReference type="EC" id="2.1.2.1"/>
    </reaction>
</comment>
<comment type="cofactor">
    <cofactor evidence="1">
        <name>pyridoxal 5'-phosphate</name>
        <dbReference type="ChEBI" id="CHEBI:597326"/>
    </cofactor>
</comment>
<comment type="pathway">
    <text evidence="1">One-carbon metabolism; tetrahydrofolate interconversion.</text>
</comment>
<comment type="pathway">
    <text evidence="1">Amino-acid biosynthesis; glycine biosynthesis; glycine from L-serine: step 1/1.</text>
</comment>
<comment type="subunit">
    <text evidence="1">Homodimer.</text>
</comment>
<comment type="subcellular location">
    <subcellularLocation>
        <location evidence="1">Cytoplasm</location>
    </subcellularLocation>
</comment>
<comment type="similarity">
    <text evidence="1">Belongs to the SHMT family.</text>
</comment>
<comment type="sequence caution" evidence="2">
    <conflict type="erroneous initiation">
        <sequence resource="EMBL-CDS" id="AAD18661"/>
    </conflict>
</comment>
<comment type="sequence caution" evidence="2">
    <conflict type="erroneous initiation">
        <sequence resource="EMBL-CDS" id="AAP98471"/>
    </conflict>
</comment>
<comment type="sequence caution" evidence="2">
    <conflict type="erroneous initiation">
        <sequence resource="EMBL-CDS" id="BAA98727"/>
    </conflict>
</comment>
<organism>
    <name type="scientific">Chlamydia pneumoniae</name>
    <name type="common">Chlamydophila pneumoniae</name>
    <dbReference type="NCBI Taxonomy" id="83558"/>
    <lineage>
        <taxon>Bacteria</taxon>
        <taxon>Pseudomonadati</taxon>
        <taxon>Chlamydiota</taxon>
        <taxon>Chlamydiia</taxon>
        <taxon>Chlamydiales</taxon>
        <taxon>Chlamydiaceae</taxon>
        <taxon>Chlamydia/Chlamydophila group</taxon>
        <taxon>Chlamydia</taxon>
    </lineage>
</organism>
<keyword id="KW-0028">Amino-acid biosynthesis</keyword>
<keyword id="KW-0963">Cytoplasm</keyword>
<keyword id="KW-0554">One-carbon metabolism</keyword>
<keyword id="KW-0663">Pyridoxal phosphate</keyword>
<keyword id="KW-0808">Transferase</keyword>
<sequence>MVSLLHKFLENASGKKGQSLASTAYLAALDHLLNAFPSIGERIIDELKSQRSHLKMIASENYSSLSVQLAMGNLLTDKYCEGSPFKRFYSCCENVDAIEWECVETAKELFAADCACVQPHSGADANLLAVMAILTHKVQGPAVSKLGYKTVNELTEEEYTLLKAEMSSCVCLGPSLNSGGHLTHGNVRLNVMSKLMRCFPYDVNPDTECFDYAEISRLAKEYKPKVLIAGYSSYSRRLNFAVLKQIAEDCGSVLWVDMAHFAGLVAGGVFVDEENPIPYADIVTTTTHKTLRGPRGGLVLATREYESTLNKACPLMMGGPLPHVIAAKTVALKEALSVDFKKYAHQVVNNARRLAERFLSHGLRLLTGGTDNHMMVIDLGSLGISGKIAEDILSSVGIAVNRNSLPSDAIGKWDTSGIRLGTPALTTLGMGIDEMEEVADIIVKVLRNIRLSCHVEGSSKKNKGELPEAIAQEARDRVRNLLLRFPLYPEIDLEALV</sequence>
<gene>
    <name evidence="1" type="primary">glyA</name>
    <name type="ordered locus">CPn_0521</name>
    <name type="ordered locus">CP_0232</name>
    <name type="ordered locus">CpB0542</name>
</gene>